<comment type="function">
    <text>May be involved in the transport of PQQ or its precursor to the periplasm, in association with PQQ biosynthesis, but is not absolutely required for this synthesis.</text>
</comment>
<comment type="pathway">
    <text>Cofactor biosynthesis; pyrroloquinoline quinone biosynthesis.</text>
</comment>
<comment type="similarity">
    <text evidence="1">Belongs to the PqqB family.</text>
</comment>
<keyword id="KW-0884">PQQ biosynthesis</keyword>
<keyword id="KW-0813">Transport</keyword>
<gene>
    <name type="primary">pqqB</name>
    <name type="ordered locus">ACIAD2504</name>
</gene>
<organism>
    <name type="scientific">Acinetobacter baylyi (strain ATCC 33305 / BD413 / ADP1)</name>
    <dbReference type="NCBI Taxonomy" id="62977"/>
    <lineage>
        <taxon>Bacteria</taxon>
        <taxon>Pseudomonadati</taxon>
        <taxon>Pseudomonadota</taxon>
        <taxon>Gammaproteobacteria</taxon>
        <taxon>Moraxellales</taxon>
        <taxon>Moraxellaceae</taxon>
        <taxon>Acinetobacter</taxon>
    </lineage>
</organism>
<reference key="1">
    <citation type="journal article" date="2004" name="Nucleic Acids Res.">
        <title>Unique features revealed by the genome sequence of Acinetobacter sp. ADP1, a versatile and naturally transformation competent bacterium.</title>
        <authorList>
            <person name="Barbe V."/>
            <person name="Vallenet D."/>
            <person name="Fonknechten N."/>
            <person name="Kreimeyer A."/>
            <person name="Oztas S."/>
            <person name="Labarre L."/>
            <person name="Cruveiller S."/>
            <person name="Robert C."/>
            <person name="Duprat S."/>
            <person name="Wincker P."/>
            <person name="Ornston L.N."/>
            <person name="Weissenbach J."/>
            <person name="Marliere P."/>
            <person name="Cohen G.N."/>
            <person name="Medigue C."/>
        </authorList>
    </citation>
    <scope>NUCLEOTIDE SEQUENCE [LARGE SCALE GENOMIC DNA]</scope>
    <source>
        <strain>ATCC 33305 / BD413 / ADP1</strain>
    </source>
</reference>
<accession>Q6F9J2</accession>
<evidence type="ECO:0000305" key="1"/>
<proteinExistence type="inferred from homology"/>
<name>PQQB_ACIAD</name>
<protein>
    <recommendedName>
        <fullName>Coenzyme PQQ synthesis protein B</fullName>
    </recommendedName>
    <alternativeName>
        <fullName>Pyrroloquinoline quinone biosynthesis protein B</fullName>
    </alternativeName>
</protein>
<feature type="chain" id="PRO_0000219995" description="Coenzyme PQQ synthesis protein B">
    <location>
        <begin position="1"/>
        <end position="304"/>
    </location>
</feature>
<sequence>MLIKILGSAAGGGFPQWNCNCENCLGLKQGTIQAKARTQSSIAISDNGKDWILCNASPDIAQQIAHNPELQAPSSIRRGTSIGSIILTDSQIDHTTGLLNLREGCPHQVWATPEVHEDLSTGFPIFNMLKHWNGGLVHHPIDIQTSFQVAVCEAIRFTPVPILSNAPPYSPYRHRPLPGHNIALWIEDTRTGHSLFYAPGLGQMDDSILSYMQRADCLLVDGTLWKDQELALLGVGKNTGQDMGHLALQEERGLIHLLSQFPKQRKVLIHINNTNPILNEDSVERATLKQLEIEVSYDGMLIEV</sequence>
<dbReference type="EMBL" id="CR543861">
    <property type="protein sequence ID" value="CAG69272.1"/>
    <property type="molecule type" value="Genomic_DNA"/>
</dbReference>
<dbReference type="RefSeq" id="WP_004928517.1">
    <property type="nucleotide sequence ID" value="NC_005966.1"/>
</dbReference>
<dbReference type="SMR" id="Q6F9J2"/>
<dbReference type="STRING" id="202950.GCA_001485005_01510"/>
<dbReference type="GeneID" id="45234791"/>
<dbReference type="KEGG" id="aci:ACIAD2504"/>
<dbReference type="eggNOG" id="COG1235">
    <property type="taxonomic scope" value="Bacteria"/>
</dbReference>
<dbReference type="HOGENOM" id="CLU_061120_0_0_6"/>
<dbReference type="OrthoDB" id="9778305at2"/>
<dbReference type="BioCyc" id="ASP62977:ACIAD_RS11370-MONOMER"/>
<dbReference type="UniPathway" id="UPA00539"/>
<dbReference type="Proteomes" id="UP000000430">
    <property type="component" value="Chromosome"/>
</dbReference>
<dbReference type="GO" id="GO:0018189">
    <property type="term" value="P:pyrroloquinoline quinone biosynthetic process"/>
    <property type="evidence" value="ECO:0007669"/>
    <property type="project" value="UniProtKB-UniRule"/>
</dbReference>
<dbReference type="CDD" id="cd16274">
    <property type="entry name" value="PQQB-like_MBL-fold"/>
    <property type="match status" value="1"/>
</dbReference>
<dbReference type="Gene3D" id="3.60.15.10">
    <property type="entry name" value="Ribonuclease Z/Hydroxyacylglutathione hydrolase-like"/>
    <property type="match status" value="1"/>
</dbReference>
<dbReference type="HAMAP" id="MF_00653">
    <property type="entry name" value="PQQ_syn_PqqB"/>
    <property type="match status" value="1"/>
</dbReference>
<dbReference type="InterPro" id="IPR001279">
    <property type="entry name" value="Metallo-B-lactamas"/>
</dbReference>
<dbReference type="InterPro" id="IPR011842">
    <property type="entry name" value="PQQ_synth_PqqB"/>
</dbReference>
<dbReference type="InterPro" id="IPR036866">
    <property type="entry name" value="RibonucZ/Hydroxyglut_hydro"/>
</dbReference>
<dbReference type="NCBIfam" id="TIGR02108">
    <property type="entry name" value="PQQ_syn_pqqB"/>
    <property type="match status" value="1"/>
</dbReference>
<dbReference type="PANTHER" id="PTHR42663:SF7">
    <property type="entry name" value="COENZYME PQQ SYNTHESIS PROTEIN B"/>
    <property type="match status" value="1"/>
</dbReference>
<dbReference type="PANTHER" id="PTHR42663">
    <property type="entry name" value="HYDROLASE C777.06C-RELATED-RELATED"/>
    <property type="match status" value="1"/>
</dbReference>
<dbReference type="Pfam" id="PF12706">
    <property type="entry name" value="Lactamase_B_2"/>
    <property type="match status" value="1"/>
</dbReference>
<dbReference type="SUPFAM" id="SSF56281">
    <property type="entry name" value="Metallo-hydrolase/oxidoreductase"/>
    <property type="match status" value="1"/>
</dbReference>